<comment type="subunit">
    <text evidence="1">Part of the 50S ribosomal subunit.</text>
</comment>
<comment type="similarity">
    <text evidence="1">Belongs to the bacterial ribosomal protein bL31 family. Type B subfamily.</text>
</comment>
<feature type="chain" id="PRO_1000126828" description="Large ribosomal subunit protein bL31B">
    <location>
        <begin position="1"/>
        <end position="87"/>
    </location>
</feature>
<name>RL31B_PSEA8</name>
<dbReference type="EMBL" id="FM209186">
    <property type="protein sequence ID" value="CAW26162.1"/>
    <property type="molecule type" value="Genomic_DNA"/>
</dbReference>
<dbReference type="RefSeq" id="WP_003092213.1">
    <property type="nucleotide sequence ID" value="NC_011770.1"/>
</dbReference>
<dbReference type="SMR" id="B7V9F6"/>
<dbReference type="KEGG" id="pag:PLES_14341"/>
<dbReference type="HOGENOM" id="CLU_114306_2_2_6"/>
<dbReference type="GO" id="GO:1990904">
    <property type="term" value="C:ribonucleoprotein complex"/>
    <property type="evidence" value="ECO:0007669"/>
    <property type="project" value="UniProtKB-KW"/>
</dbReference>
<dbReference type="GO" id="GO:0005840">
    <property type="term" value="C:ribosome"/>
    <property type="evidence" value="ECO:0007669"/>
    <property type="project" value="UniProtKB-KW"/>
</dbReference>
<dbReference type="GO" id="GO:0003735">
    <property type="term" value="F:structural constituent of ribosome"/>
    <property type="evidence" value="ECO:0007669"/>
    <property type="project" value="InterPro"/>
</dbReference>
<dbReference type="GO" id="GO:0006412">
    <property type="term" value="P:translation"/>
    <property type="evidence" value="ECO:0007669"/>
    <property type="project" value="UniProtKB-UniRule"/>
</dbReference>
<dbReference type="Gene3D" id="4.10.830.30">
    <property type="entry name" value="Ribosomal protein L31"/>
    <property type="match status" value="1"/>
</dbReference>
<dbReference type="HAMAP" id="MF_00502">
    <property type="entry name" value="Ribosomal_bL31_2"/>
    <property type="match status" value="1"/>
</dbReference>
<dbReference type="InterPro" id="IPR034704">
    <property type="entry name" value="Ribosomal_bL28/bL31-like_sf"/>
</dbReference>
<dbReference type="InterPro" id="IPR002150">
    <property type="entry name" value="Ribosomal_bL31"/>
</dbReference>
<dbReference type="InterPro" id="IPR027493">
    <property type="entry name" value="Ribosomal_bL31_B"/>
</dbReference>
<dbReference type="InterPro" id="IPR042105">
    <property type="entry name" value="Ribosomal_bL31_sf"/>
</dbReference>
<dbReference type="NCBIfam" id="TIGR00105">
    <property type="entry name" value="L31"/>
    <property type="match status" value="1"/>
</dbReference>
<dbReference type="NCBIfam" id="NF002462">
    <property type="entry name" value="PRK01678.1"/>
    <property type="match status" value="1"/>
</dbReference>
<dbReference type="PANTHER" id="PTHR33280">
    <property type="entry name" value="50S RIBOSOMAL PROTEIN L31, CHLOROPLASTIC"/>
    <property type="match status" value="1"/>
</dbReference>
<dbReference type="PANTHER" id="PTHR33280:SF1">
    <property type="entry name" value="LARGE RIBOSOMAL SUBUNIT PROTEIN BL31C"/>
    <property type="match status" value="1"/>
</dbReference>
<dbReference type="Pfam" id="PF01197">
    <property type="entry name" value="Ribosomal_L31"/>
    <property type="match status" value="1"/>
</dbReference>
<dbReference type="PRINTS" id="PR01249">
    <property type="entry name" value="RIBOSOMALL31"/>
</dbReference>
<dbReference type="SUPFAM" id="SSF143800">
    <property type="entry name" value="L28p-like"/>
    <property type="match status" value="1"/>
</dbReference>
<dbReference type="PROSITE" id="PS01143">
    <property type="entry name" value="RIBOSOMAL_L31"/>
    <property type="match status" value="1"/>
</dbReference>
<sequence length="87" mass="9519">MKPGIHPEYRPVLFHDTSADVYFLIGSTAETDKTHTHTDGKTYPYVTLDVSSASHPVYTGEQRKTKSEGRVAGFNKRFAGFVGGKGA</sequence>
<gene>
    <name evidence="1" type="primary">rpmE2</name>
    <name type="ordered locus">PLES_14341</name>
</gene>
<proteinExistence type="inferred from homology"/>
<protein>
    <recommendedName>
        <fullName evidence="1">Large ribosomal subunit protein bL31B</fullName>
    </recommendedName>
    <alternativeName>
        <fullName evidence="2">50S ribosomal protein L31 type B</fullName>
    </alternativeName>
</protein>
<reference key="1">
    <citation type="journal article" date="2009" name="Genome Res.">
        <title>Newly introduced genomic prophage islands are critical determinants of in vivo competitiveness in the Liverpool epidemic strain of Pseudomonas aeruginosa.</title>
        <authorList>
            <person name="Winstanley C."/>
            <person name="Langille M.G.I."/>
            <person name="Fothergill J.L."/>
            <person name="Kukavica-Ibrulj I."/>
            <person name="Paradis-Bleau C."/>
            <person name="Sanschagrin F."/>
            <person name="Thomson N.R."/>
            <person name="Winsor G.L."/>
            <person name="Quail M.A."/>
            <person name="Lennard N."/>
            <person name="Bignell A."/>
            <person name="Clarke L."/>
            <person name="Seeger K."/>
            <person name="Saunders D."/>
            <person name="Harris D."/>
            <person name="Parkhill J."/>
            <person name="Hancock R.E.W."/>
            <person name="Brinkman F.S.L."/>
            <person name="Levesque R.C."/>
        </authorList>
    </citation>
    <scope>NUCLEOTIDE SEQUENCE [LARGE SCALE GENOMIC DNA]</scope>
    <source>
        <strain>LESB58</strain>
    </source>
</reference>
<organism>
    <name type="scientific">Pseudomonas aeruginosa (strain LESB58)</name>
    <dbReference type="NCBI Taxonomy" id="557722"/>
    <lineage>
        <taxon>Bacteria</taxon>
        <taxon>Pseudomonadati</taxon>
        <taxon>Pseudomonadota</taxon>
        <taxon>Gammaproteobacteria</taxon>
        <taxon>Pseudomonadales</taxon>
        <taxon>Pseudomonadaceae</taxon>
        <taxon>Pseudomonas</taxon>
    </lineage>
</organism>
<keyword id="KW-0687">Ribonucleoprotein</keyword>
<keyword id="KW-0689">Ribosomal protein</keyword>
<accession>B7V9F6</accession>
<evidence type="ECO:0000255" key="1">
    <source>
        <dbReference type="HAMAP-Rule" id="MF_00502"/>
    </source>
</evidence>
<evidence type="ECO:0000305" key="2"/>